<accession>Q2RQW2</accession>
<reference key="1">
    <citation type="journal article" date="2011" name="Stand. Genomic Sci.">
        <title>Complete genome sequence of Rhodospirillum rubrum type strain (S1).</title>
        <authorList>
            <person name="Munk A.C."/>
            <person name="Copeland A."/>
            <person name="Lucas S."/>
            <person name="Lapidus A."/>
            <person name="Del Rio T.G."/>
            <person name="Barry K."/>
            <person name="Detter J.C."/>
            <person name="Hammon N."/>
            <person name="Israni S."/>
            <person name="Pitluck S."/>
            <person name="Brettin T."/>
            <person name="Bruce D."/>
            <person name="Han C."/>
            <person name="Tapia R."/>
            <person name="Gilna P."/>
            <person name="Schmutz J."/>
            <person name="Larimer F."/>
            <person name="Land M."/>
            <person name="Kyrpides N.C."/>
            <person name="Mavromatis K."/>
            <person name="Richardson P."/>
            <person name="Rohde M."/>
            <person name="Goeker M."/>
            <person name="Klenk H.P."/>
            <person name="Zhang Y."/>
            <person name="Roberts G.P."/>
            <person name="Reslewic S."/>
            <person name="Schwartz D.C."/>
        </authorList>
    </citation>
    <scope>NUCLEOTIDE SEQUENCE [LARGE SCALE GENOMIC DNA]</scope>
    <source>
        <strain>ATCC 11170 / ATH 1.1.1 / DSM 467 / LMG 4362 / NCIMB 8255 / S1</strain>
    </source>
</reference>
<feature type="chain" id="PRO_0000272827" description="Large ribosomal subunit protein uL23">
    <location>
        <begin position="1"/>
        <end position="104"/>
    </location>
</feature>
<gene>
    <name evidence="1" type="primary">rplW</name>
    <name type="ordered locus">Rru_A2686</name>
</gene>
<protein>
    <recommendedName>
        <fullName evidence="1">Large ribosomal subunit protein uL23</fullName>
    </recommendedName>
    <alternativeName>
        <fullName evidence="2">50S ribosomal protein L23</fullName>
    </alternativeName>
</protein>
<organism>
    <name type="scientific">Rhodospirillum rubrum (strain ATCC 11170 / ATH 1.1.1 / DSM 467 / LMG 4362 / NCIMB 8255 / S1)</name>
    <dbReference type="NCBI Taxonomy" id="269796"/>
    <lineage>
        <taxon>Bacteria</taxon>
        <taxon>Pseudomonadati</taxon>
        <taxon>Pseudomonadota</taxon>
        <taxon>Alphaproteobacteria</taxon>
        <taxon>Rhodospirillales</taxon>
        <taxon>Rhodospirillaceae</taxon>
        <taxon>Rhodospirillum</taxon>
    </lineage>
</organism>
<evidence type="ECO:0000255" key="1">
    <source>
        <dbReference type="HAMAP-Rule" id="MF_01369"/>
    </source>
</evidence>
<evidence type="ECO:0000305" key="2"/>
<keyword id="KW-1185">Reference proteome</keyword>
<keyword id="KW-0687">Ribonucleoprotein</keyword>
<keyword id="KW-0689">Ribosomal protein</keyword>
<keyword id="KW-0694">RNA-binding</keyword>
<keyword id="KW-0699">rRNA-binding</keyword>
<name>RL23_RHORT</name>
<dbReference type="EMBL" id="CP000230">
    <property type="protein sequence ID" value="ABC23483.1"/>
    <property type="molecule type" value="Genomic_DNA"/>
</dbReference>
<dbReference type="RefSeq" id="YP_427770.1">
    <property type="nucleotide sequence ID" value="NC_007643.1"/>
</dbReference>
<dbReference type="SMR" id="Q2RQW2"/>
<dbReference type="STRING" id="269796.Rru_A2686"/>
<dbReference type="EnsemblBacteria" id="ABC23483">
    <property type="protein sequence ID" value="ABC23483"/>
    <property type="gene ID" value="Rru_A2686"/>
</dbReference>
<dbReference type="KEGG" id="rru:Rru_A2686"/>
<dbReference type="PATRIC" id="fig|269796.9.peg.2793"/>
<dbReference type="eggNOG" id="COG0089">
    <property type="taxonomic scope" value="Bacteria"/>
</dbReference>
<dbReference type="HOGENOM" id="CLU_037562_3_1_5"/>
<dbReference type="PhylomeDB" id="Q2RQW2"/>
<dbReference type="Proteomes" id="UP000001929">
    <property type="component" value="Chromosome"/>
</dbReference>
<dbReference type="GO" id="GO:1990904">
    <property type="term" value="C:ribonucleoprotein complex"/>
    <property type="evidence" value="ECO:0007669"/>
    <property type="project" value="UniProtKB-KW"/>
</dbReference>
<dbReference type="GO" id="GO:0005840">
    <property type="term" value="C:ribosome"/>
    <property type="evidence" value="ECO:0007669"/>
    <property type="project" value="UniProtKB-KW"/>
</dbReference>
<dbReference type="GO" id="GO:0019843">
    <property type="term" value="F:rRNA binding"/>
    <property type="evidence" value="ECO:0007669"/>
    <property type="project" value="UniProtKB-UniRule"/>
</dbReference>
<dbReference type="GO" id="GO:0003735">
    <property type="term" value="F:structural constituent of ribosome"/>
    <property type="evidence" value="ECO:0007669"/>
    <property type="project" value="InterPro"/>
</dbReference>
<dbReference type="GO" id="GO:0006412">
    <property type="term" value="P:translation"/>
    <property type="evidence" value="ECO:0007669"/>
    <property type="project" value="UniProtKB-UniRule"/>
</dbReference>
<dbReference type="FunFam" id="3.30.70.330:FF:000001">
    <property type="entry name" value="50S ribosomal protein L23"/>
    <property type="match status" value="1"/>
</dbReference>
<dbReference type="Gene3D" id="3.30.70.330">
    <property type="match status" value="1"/>
</dbReference>
<dbReference type="HAMAP" id="MF_01369_B">
    <property type="entry name" value="Ribosomal_uL23_B"/>
    <property type="match status" value="1"/>
</dbReference>
<dbReference type="InterPro" id="IPR012677">
    <property type="entry name" value="Nucleotide-bd_a/b_plait_sf"/>
</dbReference>
<dbReference type="InterPro" id="IPR013025">
    <property type="entry name" value="Ribosomal_uL23-like"/>
</dbReference>
<dbReference type="InterPro" id="IPR012678">
    <property type="entry name" value="Ribosomal_uL23/eL15/eS24_sf"/>
</dbReference>
<dbReference type="InterPro" id="IPR001014">
    <property type="entry name" value="Ribosomal_uL23_CS"/>
</dbReference>
<dbReference type="NCBIfam" id="NF004359">
    <property type="entry name" value="PRK05738.1-3"/>
    <property type="match status" value="1"/>
</dbReference>
<dbReference type="NCBIfam" id="NF004360">
    <property type="entry name" value="PRK05738.1-5"/>
    <property type="match status" value="1"/>
</dbReference>
<dbReference type="NCBIfam" id="NF004363">
    <property type="entry name" value="PRK05738.2-4"/>
    <property type="match status" value="1"/>
</dbReference>
<dbReference type="PANTHER" id="PTHR11620">
    <property type="entry name" value="60S RIBOSOMAL PROTEIN L23A"/>
    <property type="match status" value="1"/>
</dbReference>
<dbReference type="Pfam" id="PF00276">
    <property type="entry name" value="Ribosomal_L23"/>
    <property type="match status" value="1"/>
</dbReference>
<dbReference type="SUPFAM" id="SSF54189">
    <property type="entry name" value="Ribosomal proteins S24e, L23 and L15e"/>
    <property type="match status" value="1"/>
</dbReference>
<dbReference type="PROSITE" id="PS00050">
    <property type="entry name" value="RIBOSOMAL_L23"/>
    <property type="match status" value="1"/>
</dbReference>
<comment type="function">
    <text evidence="1">One of the early assembly proteins it binds 23S rRNA. One of the proteins that surrounds the polypeptide exit tunnel on the outside of the ribosome. Forms the main docking site for trigger factor binding to the ribosome.</text>
</comment>
<comment type="subunit">
    <text evidence="1">Part of the 50S ribosomal subunit. Contacts protein L29, and trigger factor when it is bound to the ribosome.</text>
</comment>
<comment type="similarity">
    <text evidence="1">Belongs to the universal ribosomal protein uL23 family.</text>
</comment>
<sequence>MSMTEVKISEERKYDIVRAPVITEKATLIGEHGQVIFRVPLDATKPEIKAAVEGLFKVKVKAVNTLRSKGKVKRFRGTVGKRSDTKKAIVTLAEGHSIDVTTGI</sequence>
<proteinExistence type="inferred from homology"/>